<protein>
    <recommendedName>
        <fullName>Protein PR73 5'-endogenous</fullName>
    </recommendedName>
</protein>
<evidence type="ECO:0000250" key="1"/>
<evidence type="ECO:0000255" key="2"/>
<evidence type="ECO:0000305" key="3"/>
<organismHost>
    <name type="scientific">Mus musculus</name>
    <name type="common">Mouse</name>
    <dbReference type="NCBI Taxonomy" id="10090"/>
</organismHost>
<comment type="function">
    <text evidence="1">Superantigen.</text>
</comment>
<comment type="subcellular location">
    <subcellularLocation>
        <location evidence="3">Membrane</location>
        <topology evidence="3">Single-pass type II membrane protein</topology>
    </subcellularLocation>
</comment>
<comment type="miscellaneous">
    <text>This protein is coded in the long terminal repeat (LTR).</text>
</comment>
<comment type="similarity">
    <text evidence="3">Belongs to the mouse mammary tumor virus PR73 superantigen family.</text>
</comment>
<reference key="1">
    <citation type="journal article" date="1982" name="Nature">
        <title>Long terminal repeats of endogenous mouse mammary tumour virus contain a long open reading frame which extends into adjacent sequences.</title>
        <authorList>
            <person name="Kennedy N."/>
            <person name="Knedlitschek G."/>
            <person name="Groner B."/>
            <person name="Hynes N.E."/>
            <person name="Herrlich P."/>
            <person name="Michalides R."/>
            <person name="van Ooyen A.J.J."/>
        </authorList>
    </citation>
    <scope>NUCLEOTIDE SEQUENCE [GENOMIC RNA]</scope>
</reference>
<name>PR7L_MMTVG</name>
<feature type="chain" id="PRO_0000125503" description="Protein PR73 5'-endogenous">
    <location>
        <begin position="1"/>
        <end position="324"/>
    </location>
</feature>
<feature type="topological domain" description="Cytoplasmic" evidence="2">
    <location>
        <begin position="1"/>
        <end position="48"/>
    </location>
</feature>
<feature type="transmembrane region" description="Helical" evidence="2">
    <location>
        <begin position="49"/>
        <end position="69"/>
    </location>
</feature>
<feature type="topological domain" description="Extracellular" evidence="2">
    <location>
        <begin position="70"/>
        <end position="324"/>
    </location>
</feature>
<feature type="glycosylation site" description="N-linked (GlcNAc...) asparagine; by host" evidence="2">
    <location>
        <position position="83"/>
    </location>
</feature>
<feature type="glycosylation site" description="N-linked (GlcNAc...) asparagine; by host" evidence="2">
    <location>
        <position position="84"/>
    </location>
</feature>
<feature type="glycosylation site" description="N-linked (GlcNAc...) asparagine; by host" evidence="2">
    <location>
        <position position="93"/>
    </location>
</feature>
<feature type="glycosylation site" description="N-linked (GlcNAc...) asparagine; by host" evidence="2">
    <location>
        <position position="97"/>
    </location>
</feature>
<feature type="glycosylation site" description="N-linked (GlcNAc...) asparagine; by host" evidence="2">
    <location>
        <position position="135"/>
    </location>
</feature>
<feature type="glycosylation site" description="N-linked (GlcNAc...) asparagine; by host" evidence="2">
    <location>
        <position position="150"/>
    </location>
</feature>
<sequence length="324" mass="37220">MLLVLPRLQQKWLNSRECPTLRREAAKGLFPTKDDPSACTRMSPSDKDILILCCKLGIALLCLGLLGEVAVRARRALTLDSFNNSSVQDYNLNNSENSTFLLGQGPQPTSSYKPHRLCPSEIEIRMLAKNYIFTNKTNPIGRLLIMMLRNESLSFSTIFTQIQRLEMGIENRKRRSTSVEEQVQGLRASGLEVKRGKRSTLVKIGDRWWQPGTYRGPYIYRPTDAPLPYTGRYDLNFDRWVTVNGYKVLYRSLPFRERLARARPPWCVLTQEEKDDIKQQVHDYIYLGTGMNVWGKIFHYTKEGAVARQLEHISADTFGMSYNG</sequence>
<keyword id="KW-0325">Glycoprotein</keyword>
<keyword id="KW-0472">Membrane</keyword>
<keyword id="KW-0735">Signal-anchor</keyword>
<keyword id="KW-0766">Superantigen</keyword>
<keyword id="KW-0812">Transmembrane</keyword>
<keyword id="KW-1133">Transmembrane helix</keyword>
<accession>P03321</accession>
<dbReference type="EMBL" id="J02271">
    <property type="status" value="NOT_ANNOTATED_CDS"/>
    <property type="molecule type" value="Genomic_RNA"/>
</dbReference>
<dbReference type="PIR" id="A03921">
    <property type="entry name" value="QQMV6M"/>
</dbReference>
<dbReference type="SMR" id="P03321"/>
<dbReference type="GO" id="GO:0016020">
    <property type="term" value="C:membrane"/>
    <property type="evidence" value="ECO:0007669"/>
    <property type="project" value="UniProtKB-SubCell"/>
</dbReference>
<dbReference type="InterPro" id="IPR001213">
    <property type="entry name" value="MMTV_SAg"/>
</dbReference>
<dbReference type="Pfam" id="PF01054">
    <property type="entry name" value="MMTV_SAg"/>
    <property type="match status" value="1"/>
</dbReference>
<organism>
    <name type="scientific">Mouse mammary tumor virus (strain GR)</name>
    <name type="common">MMTV</name>
    <dbReference type="NCBI Taxonomy" id="11760"/>
    <lineage>
        <taxon>Viruses</taxon>
        <taxon>Riboviria</taxon>
        <taxon>Pararnavirae</taxon>
        <taxon>Artverviricota</taxon>
        <taxon>Revtraviricetes</taxon>
        <taxon>Ortervirales</taxon>
        <taxon>Retroviridae</taxon>
        <taxon>Orthoretrovirinae</taxon>
        <taxon>Betaretrovirus</taxon>
        <taxon>Mouse mammary tumor virus</taxon>
    </lineage>
</organism>
<proteinExistence type="inferred from homology"/>